<proteinExistence type="evidence at protein level"/>
<name>MIMB_MYCS2</name>
<gene>
    <name evidence="6" type="primary">mimB</name>
    <name evidence="9" type="ordered locus">MSMEG_1972</name>
    <name evidence="10" type="ordered locus">MSMEI_1928</name>
</gene>
<feature type="chain" id="PRO_0000442945" description="Propane 2-monooxygenase, reductase component">
    <location>
        <begin position="1"/>
        <end position="348"/>
    </location>
</feature>
<feature type="domain" description="2Fe-2S ferredoxin-type" evidence="2">
    <location>
        <begin position="5"/>
        <end position="95"/>
    </location>
</feature>
<feature type="domain" description="FAD-binding FR-type" evidence="3">
    <location>
        <begin position="105"/>
        <end position="206"/>
    </location>
</feature>
<feature type="binding site" evidence="2">
    <location>
        <position position="39"/>
    </location>
    <ligand>
        <name>[2Fe-2S] cluster</name>
        <dbReference type="ChEBI" id="CHEBI:190135"/>
    </ligand>
</feature>
<feature type="binding site" evidence="2">
    <location>
        <position position="44"/>
    </location>
    <ligand>
        <name>[2Fe-2S] cluster</name>
        <dbReference type="ChEBI" id="CHEBI:190135"/>
    </ligand>
</feature>
<feature type="binding site" evidence="2">
    <location>
        <position position="47"/>
    </location>
    <ligand>
        <name>[2Fe-2S] cluster</name>
        <dbReference type="ChEBI" id="CHEBI:190135"/>
    </ligand>
</feature>
<feature type="binding site" evidence="2">
    <location>
        <position position="79"/>
    </location>
    <ligand>
        <name>[2Fe-2S] cluster</name>
        <dbReference type="ChEBI" id="CHEBI:190135"/>
    </ligand>
</feature>
<evidence type="ECO:0000250" key="1">
    <source>
        <dbReference type="UniProtKB" id="Q03304"/>
    </source>
</evidence>
<evidence type="ECO:0000255" key="2">
    <source>
        <dbReference type="PROSITE-ProRule" id="PRU00465"/>
    </source>
</evidence>
<evidence type="ECO:0000255" key="3">
    <source>
        <dbReference type="PROSITE-ProRule" id="PRU00716"/>
    </source>
</evidence>
<evidence type="ECO:0000269" key="4">
    <source>
    </source>
</evidence>
<evidence type="ECO:0000269" key="5">
    <source>
    </source>
</evidence>
<evidence type="ECO:0000303" key="6">
    <source>
    </source>
</evidence>
<evidence type="ECO:0000305" key="7"/>
<evidence type="ECO:0000305" key="8">
    <source>
    </source>
</evidence>
<evidence type="ECO:0000312" key="9">
    <source>
        <dbReference type="EMBL" id="ABK70076.1"/>
    </source>
</evidence>
<evidence type="ECO:0000312" key="10">
    <source>
        <dbReference type="EMBL" id="AFP38399.1"/>
    </source>
</evidence>
<evidence type="ECO:0000312" key="11">
    <source>
        <dbReference type="Proteomes" id="UP000000757"/>
    </source>
</evidence>
<evidence type="ECO:0000312" key="12">
    <source>
        <dbReference type="Proteomes" id="UP000006158"/>
    </source>
</evidence>
<sequence>MADSHKINFDPVDIEMEVREDENILDAAFRQGIHLMHGCREGRCSACKSYVLDGEIQMESYSTFACNDAEVDEGYVLLCRSHAFSDCTIELLNFDEDELLGGIPIQDVRTQVQAVEPKTRDIVSLRLKPIEPGKFDFKPGQYADLHIPGTDEHRSFSMATTQSRSDEVEFLIKKYPGGKFSALLDGHIQVGDEIALTGPYGSFTLKDGHVLPVVCIGGGAGMAPILSLLRHMNETENSRPARFYYGARTPADLFYLDEILELGKGIKDFRFIACLSESADGEVPGRVTVEEGMVTDVVARHETAIAKTEVYLCGPPPMVDAALMFLDANCVPKDQVFYDSFTSPIFDQ</sequence>
<dbReference type="EC" id="1.18.1.-" evidence="7"/>
<dbReference type="EMBL" id="CP000480">
    <property type="protein sequence ID" value="ABK70076.1"/>
    <property type="molecule type" value="Genomic_DNA"/>
</dbReference>
<dbReference type="EMBL" id="CP001663">
    <property type="protein sequence ID" value="AFP38399.1"/>
    <property type="molecule type" value="Genomic_DNA"/>
</dbReference>
<dbReference type="RefSeq" id="WP_011728054.1">
    <property type="nucleotide sequence ID" value="NZ_SIJM01000020.1"/>
</dbReference>
<dbReference type="RefSeq" id="YP_886337.1">
    <property type="nucleotide sequence ID" value="NC_008596.1"/>
</dbReference>
<dbReference type="SMR" id="A0QTU9"/>
<dbReference type="STRING" id="246196.MSMEG_1972"/>
<dbReference type="PaxDb" id="246196-MSMEI_1928"/>
<dbReference type="KEGG" id="msb:LJ00_09840"/>
<dbReference type="KEGG" id="msg:MSMEI_1928"/>
<dbReference type="KEGG" id="msm:MSMEG_1972"/>
<dbReference type="PATRIC" id="fig|246196.19.peg.1949"/>
<dbReference type="eggNOG" id="COG1018">
    <property type="taxonomic scope" value="Bacteria"/>
</dbReference>
<dbReference type="OrthoDB" id="4307358at2"/>
<dbReference type="Proteomes" id="UP000000757">
    <property type="component" value="Chromosome"/>
</dbReference>
<dbReference type="Proteomes" id="UP000006158">
    <property type="component" value="Chromosome"/>
</dbReference>
<dbReference type="GO" id="GO:0051537">
    <property type="term" value="F:2 iron, 2 sulfur cluster binding"/>
    <property type="evidence" value="ECO:0007669"/>
    <property type="project" value="UniProtKB-KW"/>
</dbReference>
<dbReference type="GO" id="GO:0046872">
    <property type="term" value="F:metal ion binding"/>
    <property type="evidence" value="ECO:0007669"/>
    <property type="project" value="UniProtKB-KW"/>
</dbReference>
<dbReference type="GO" id="GO:0016491">
    <property type="term" value="F:oxidoreductase activity"/>
    <property type="evidence" value="ECO:0007669"/>
    <property type="project" value="UniProtKB-KW"/>
</dbReference>
<dbReference type="CDD" id="cd00207">
    <property type="entry name" value="fer2"/>
    <property type="match status" value="1"/>
</dbReference>
<dbReference type="Gene3D" id="3.10.20.30">
    <property type="match status" value="1"/>
</dbReference>
<dbReference type="Gene3D" id="3.40.50.80">
    <property type="entry name" value="Nucleotide-binding domain of ferredoxin-NADP reductase (FNR) module"/>
    <property type="match status" value="1"/>
</dbReference>
<dbReference type="Gene3D" id="2.40.30.10">
    <property type="entry name" value="Translation factors"/>
    <property type="match status" value="1"/>
</dbReference>
<dbReference type="InterPro" id="IPR036010">
    <property type="entry name" value="2Fe-2S_ferredoxin-like_sf"/>
</dbReference>
<dbReference type="InterPro" id="IPR001041">
    <property type="entry name" value="2Fe-2S_ferredoxin-type"/>
</dbReference>
<dbReference type="InterPro" id="IPR006058">
    <property type="entry name" value="2Fe2S_fd_BS"/>
</dbReference>
<dbReference type="InterPro" id="IPR012675">
    <property type="entry name" value="Beta-grasp_dom_sf"/>
</dbReference>
<dbReference type="InterPro" id="IPR008333">
    <property type="entry name" value="Cbr1-like_FAD-bd_dom"/>
</dbReference>
<dbReference type="InterPro" id="IPR017927">
    <property type="entry name" value="FAD-bd_FR_type"/>
</dbReference>
<dbReference type="InterPro" id="IPR001709">
    <property type="entry name" value="Flavoprot_Pyr_Nucl_cyt_Rdtase"/>
</dbReference>
<dbReference type="InterPro" id="IPR039261">
    <property type="entry name" value="FNR_nucleotide-bd"/>
</dbReference>
<dbReference type="InterPro" id="IPR050415">
    <property type="entry name" value="MRET"/>
</dbReference>
<dbReference type="InterPro" id="IPR001433">
    <property type="entry name" value="OxRdtase_FAD/NAD-bd"/>
</dbReference>
<dbReference type="InterPro" id="IPR017938">
    <property type="entry name" value="Riboflavin_synthase-like_b-brl"/>
</dbReference>
<dbReference type="PANTHER" id="PTHR47354">
    <property type="entry name" value="NADH OXIDOREDUCTASE HCR"/>
    <property type="match status" value="1"/>
</dbReference>
<dbReference type="PANTHER" id="PTHR47354:SF5">
    <property type="entry name" value="PROTEIN RFBI"/>
    <property type="match status" value="1"/>
</dbReference>
<dbReference type="Pfam" id="PF00970">
    <property type="entry name" value="FAD_binding_6"/>
    <property type="match status" value="1"/>
</dbReference>
<dbReference type="Pfam" id="PF00111">
    <property type="entry name" value="Fer2"/>
    <property type="match status" value="1"/>
</dbReference>
<dbReference type="Pfam" id="PF00175">
    <property type="entry name" value="NAD_binding_1"/>
    <property type="match status" value="1"/>
</dbReference>
<dbReference type="PRINTS" id="PR00371">
    <property type="entry name" value="FPNCR"/>
</dbReference>
<dbReference type="PRINTS" id="PR00410">
    <property type="entry name" value="PHEHYDRXLASE"/>
</dbReference>
<dbReference type="SUPFAM" id="SSF54292">
    <property type="entry name" value="2Fe-2S ferredoxin-like"/>
    <property type="match status" value="1"/>
</dbReference>
<dbReference type="SUPFAM" id="SSF52343">
    <property type="entry name" value="Ferredoxin reductase-like, C-terminal NADP-linked domain"/>
    <property type="match status" value="1"/>
</dbReference>
<dbReference type="SUPFAM" id="SSF63380">
    <property type="entry name" value="Riboflavin synthase domain-like"/>
    <property type="match status" value="1"/>
</dbReference>
<dbReference type="PROSITE" id="PS00197">
    <property type="entry name" value="2FE2S_FER_1"/>
    <property type="match status" value="1"/>
</dbReference>
<dbReference type="PROSITE" id="PS51085">
    <property type="entry name" value="2FE2S_FER_2"/>
    <property type="match status" value="1"/>
</dbReference>
<dbReference type="PROSITE" id="PS51384">
    <property type="entry name" value="FAD_FR"/>
    <property type="match status" value="1"/>
</dbReference>
<reference key="1">
    <citation type="submission" date="2006-10" db="EMBL/GenBank/DDBJ databases">
        <authorList>
            <person name="Fleischmann R.D."/>
            <person name="Dodson R.J."/>
            <person name="Haft D.H."/>
            <person name="Merkel J.S."/>
            <person name="Nelson W.C."/>
            <person name="Fraser C.M."/>
        </authorList>
    </citation>
    <scope>NUCLEOTIDE SEQUENCE [LARGE SCALE GENOMIC DNA]</scope>
    <source>
        <strain evidence="11">ATCC 700084 / mc(2)155</strain>
    </source>
</reference>
<reference key="2">
    <citation type="journal article" date="2007" name="Genome Biol.">
        <title>Interrupted coding sequences in Mycobacterium smegmatis: authentic mutations or sequencing errors?</title>
        <authorList>
            <person name="Deshayes C."/>
            <person name="Perrodou E."/>
            <person name="Gallien S."/>
            <person name="Euphrasie D."/>
            <person name="Schaeffer C."/>
            <person name="Van-Dorsselaer A."/>
            <person name="Poch O."/>
            <person name="Lecompte O."/>
            <person name="Reyrat J.-M."/>
        </authorList>
    </citation>
    <scope>NUCLEOTIDE SEQUENCE [LARGE SCALE GENOMIC DNA]</scope>
    <source>
        <strain evidence="12">ATCC 700084 / mc(2)155</strain>
    </source>
</reference>
<reference key="3">
    <citation type="journal article" date="2009" name="Genome Res.">
        <title>Ortho-proteogenomics: multiple proteomes investigation through orthology and a new MS-based protocol.</title>
        <authorList>
            <person name="Gallien S."/>
            <person name="Perrodou E."/>
            <person name="Carapito C."/>
            <person name="Deshayes C."/>
            <person name="Reyrat J.-M."/>
            <person name="Van Dorsselaer A."/>
            <person name="Poch O."/>
            <person name="Schaeffer C."/>
            <person name="Lecompte O."/>
        </authorList>
    </citation>
    <scope>NUCLEOTIDE SEQUENCE [LARGE SCALE GENOMIC DNA]</scope>
    <source>
        <strain evidence="12">ATCC 700084 / mc(2)155</strain>
    </source>
</reference>
<reference key="4">
    <citation type="journal article" date="2011" name="Appl. Environ. Microbiol.">
        <title>Identification of the monooxygenase gene clusters responsible for the regioselective oxidation of phenol to hydroquinone in mycobacteria.</title>
        <authorList>
            <person name="Furuya T."/>
            <person name="Hirose S."/>
            <person name="Osanai H."/>
            <person name="Semba H."/>
            <person name="Kino K."/>
        </authorList>
    </citation>
    <scope>FUNCTION</scope>
    <scope>INDUCTION BY ACETONE</scope>
    <scope>SUBUNIT</scope>
</reference>
<reference key="5">
    <citation type="journal article" date="2011" name="J. Bacteriol.">
        <title>Identification of the regulator gene responsible for the acetone-responsive expression of the binuclear iron monooxygenase gene cluster in mycobacteria.</title>
        <authorList>
            <person name="Furuya T."/>
            <person name="Hirose S."/>
            <person name="Semba H."/>
            <person name="Kino K."/>
        </authorList>
    </citation>
    <scope>INDUCTION BY MIMR</scope>
</reference>
<keyword id="KW-0001">2Fe-2S</keyword>
<keyword id="KW-0274">FAD</keyword>
<keyword id="KW-0285">Flavoprotein</keyword>
<keyword id="KW-0408">Iron</keyword>
<keyword id="KW-0411">Iron-sulfur</keyword>
<keyword id="KW-0479">Metal-binding</keyword>
<keyword id="KW-0560">Oxidoreductase</keyword>
<keyword id="KW-1185">Reference proteome</keyword>
<protein>
    <recommendedName>
        <fullName evidence="6">Propane 2-monooxygenase, reductase component</fullName>
        <ecNumber evidence="7">1.18.1.-</ecNumber>
    </recommendedName>
</protein>
<accession>A0QTU9</accession>
<accession>I7G6Z1</accession>
<comment type="function">
    <text evidence="4">Reductase component of the propane 2-monooxygenase multicomponent enzyme system which is involved in the degradation of propane via the O2-dependent hydroxylation of propane. Reductase catalyzes the transfer of electrons from NADH or NADPH to monooxygenase (Probable).</text>
</comment>
<comment type="cofactor">
    <cofactor evidence="1">
        <name>FAD</name>
        <dbReference type="ChEBI" id="CHEBI:57692"/>
    </cofactor>
</comment>
<comment type="cofactor">
    <cofactor evidence="2">
        <name>[2Fe-2S] cluster</name>
        <dbReference type="ChEBI" id="CHEBI:190135"/>
    </cofactor>
    <text evidence="2">Binds 1 2Fe-2S cluster.</text>
</comment>
<comment type="subunit">
    <text evidence="8">The propane 2-monooxygenase multicomponent enzyme system is composed of an electron transfer component and a monooxygenase component interacting with the effector protein MimD. The electron transfer component is composed of a reductase (MimB), and the monooxygenase component is formed by a large subunit (MimA) and a small subunit (MimC).</text>
</comment>
<comment type="induction">
    <text evidence="4 5">By acetone (PubMed:21183637). Transcriptionally activated by MimR (PubMed:21856847).</text>
</comment>
<comment type="similarity">
    <text evidence="7">Belongs to the bacterial ring-hydroxylating dioxygenase ferredoxin reductase family.</text>
</comment>
<organism>
    <name type="scientific">Mycolicibacterium smegmatis (strain ATCC 700084 / mc(2)155)</name>
    <name type="common">Mycobacterium smegmatis</name>
    <dbReference type="NCBI Taxonomy" id="246196"/>
    <lineage>
        <taxon>Bacteria</taxon>
        <taxon>Bacillati</taxon>
        <taxon>Actinomycetota</taxon>
        <taxon>Actinomycetes</taxon>
        <taxon>Mycobacteriales</taxon>
        <taxon>Mycobacteriaceae</taxon>
        <taxon>Mycolicibacterium</taxon>
    </lineage>
</organism>